<protein>
    <recommendedName>
        <fullName evidence="2">Transaldolase</fullName>
        <ecNumber evidence="2">2.2.1.2</ecNumber>
    </recommendedName>
</protein>
<reference key="1">
    <citation type="submission" date="2008-04" db="EMBL/GenBank/DDBJ databases">
        <title>Complete sequence of Yersinia pseudotuberculosis PB1/+.</title>
        <authorList>
            <person name="Copeland A."/>
            <person name="Lucas S."/>
            <person name="Lapidus A."/>
            <person name="Glavina del Rio T."/>
            <person name="Dalin E."/>
            <person name="Tice H."/>
            <person name="Bruce D."/>
            <person name="Goodwin L."/>
            <person name="Pitluck S."/>
            <person name="Munk A.C."/>
            <person name="Brettin T."/>
            <person name="Detter J.C."/>
            <person name="Han C."/>
            <person name="Tapia R."/>
            <person name="Schmutz J."/>
            <person name="Larimer F."/>
            <person name="Land M."/>
            <person name="Hauser L."/>
            <person name="Challacombe J.F."/>
            <person name="Green L."/>
            <person name="Lindler L.E."/>
            <person name="Nikolich M.P."/>
            <person name="Richardson P."/>
        </authorList>
    </citation>
    <scope>NUCLEOTIDE SEQUENCE [LARGE SCALE GENOMIC DNA]</scope>
    <source>
        <strain>PB1/+</strain>
    </source>
</reference>
<accession>B2K3L5</accession>
<keyword id="KW-0963">Cytoplasm</keyword>
<keyword id="KW-0570">Pentose shunt</keyword>
<keyword id="KW-0704">Schiff base</keyword>
<keyword id="KW-0808">Transferase</keyword>
<feature type="chain" id="PRO_1000126261" description="Transaldolase">
    <location>
        <begin position="1"/>
        <end position="317"/>
    </location>
</feature>
<feature type="active site" description="Schiff-base intermediate with substrate" evidence="2">
    <location>
        <position position="132"/>
    </location>
</feature>
<organism>
    <name type="scientific">Yersinia pseudotuberculosis serotype IB (strain PB1/+)</name>
    <dbReference type="NCBI Taxonomy" id="502801"/>
    <lineage>
        <taxon>Bacteria</taxon>
        <taxon>Pseudomonadati</taxon>
        <taxon>Pseudomonadota</taxon>
        <taxon>Gammaproteobacteria</taxon>
        <taxon>Enterobacterales</taxon>
        <taxon>Yersiniaceae</taxon>
        <taxon>Yersinia</taxon>
    </lineage>
</organism>
<proteinExistence type="inferred from homology"/>
<gene>
    <name evidence="2" type="primary">tal</name>
    <name type="ordered locus">YPTS_0630</name>
</gene>
<name>TAL_YERPB</name>
<comment type="function">
    <text evidence="2">Transaldolase is important for the balance of metabolites in the pentose-phosphate pathway.</text>
</comment>
<comment type="catalytic activity">
    <reaction evidence="2">
        <text>D-sedoheptulose 7-phosphate + D-glyceraldehyde 3-phosphate = D-erythrose 4-phosphate + beta-D-fructose 6-phosphate</text>
        <dbReference type="Rhea" id="RHEA:17053"/>
        <dbReference type="ChEBI" id="CHEBI:16897"/>
        <dbReference type="ChEBI" id="CHEBI:57483"/>
        <dbReference type="ChEBI" id="CHEBI:57634"/>
        <dbReference type="ChEBI" id="CHEBI:59776"/>
        <dbReference type="EC" id="2.2.1.2"/>
    </reaction>
</comment>
<comment type="pathway">
    <text evidence="2">Carbohydrate degradation; pentose phosphate pathway; D-glyceraldehyde 3-phosphate and beta-D-fructose 6-phosphate from D-ribose 5-phosphate and D-xylulose 5-phosphate (non-oxidative stage): step 2/3.</text>
</comment>
<comment type="subunit">
    <text evidence="1">Homodimer.</text>
</comment>
<comment type="subcellular location">
    <subcellularLocation>
        <location evidence="2">Cytoplasm</location>
    </subcellularLocation>
</comment>
<comment type="similarity">
    <text evidence="2">Belongs to the transaldolase family. Type 1 subfamily.</text>
</comment>
<sequence>MTDKLTSLRQITTVVADTGDIAAMKLYQPQDATTNPSIILNAAQIPEYRKLIDEAIAWAREQSSDHAQQIIDATDKLAVNIGLEILKLIPGRISTEVDARLSYDTVASVTKAKRLIKLYNEAGISNDRILIKLASTWQGIRAAEQLEKEGINCNLTLLFSFAQARACAEAGVFLISPFVGRILDWYKANGDQKEFAPSEDPGVVSVTEIYQYYKKHGYKTVVMGASFRNLGEIIELAGCDRLTIAPSLLKELAESEGPVERKLAYTGEIQAKPAPLTEAEFYWQHNQDPMAVDKLADGIRKFAIDQGKLEKMISDLL</sequence>
<evidence type="ECO:0000250" key="1"/>
<evidence type="ECO:0000255" key="2">
    <source>
        <dbReference type="HAMAP-Rule" id="MF_00492"/>
    </source>
</evidence>
<dbReference type="EC" id="2.2.1.2" evidence="2"/>
<dbReference type="EMBL" id="CP001048">
    <property type="protein sequence ID" value="ACC87614.1"/>
    <property type="molecule type" value="Genomic_DNA"/>
</dbReference>
<dbReference type="RefSeq" id="WP_011191696.1">
    <property type="nucleotide sequence ID" value="NZ_CP009780.1"/>
</dbReference>
<dbReference type="SMR" id="B2K3L5"/>
<dbReference type="KEGG" id="ypb:YPTS_0630"/>
<dbReference type="PATRIC" id="fig|502801.10.peg.4310"/>
<dbReference type="UniPathway" id="UPA00115">
    <property type="reaction ID" value="UER00414"/>
</dbReference>
<dbReference type="GO" id="GO:0005829">
    <property type="term" value="C:cytosol"/>
    <property type="evidence" value="ECO:0007669"/>
    <property type="project" value="TreeGrafter"/>
</dbReference>
<dbReference type="GO" id="GO:0004801">
    <property type="term" value="F:transaldolase activity"/>
    <property type="evidence" value="ECO:0000250"/>
    <property type="project" value="UniProtKB"/>
</dbReference>
<dbReference type="GO" id="GO:0005975">
    <property type="term" value="P:carbohydrate metabolic process"/>
    <property type="evidence" value="ECO:0007669"/>
    <property type="project" value="InterPro"/>
</dbReference>
<dbReference type="GO" id="GO:0006098">
    <property type="term" value="P:pentose-phosphate shunt"/>
    <property type="evidence" value="ECO:0007669"/>
    <property type="project" value="UniProtKB-UniRule"/>
</dbReference>
<dbReference type="CDD" id="cd00957">
    <property type="entry name" value="Transaldolase_TalAB"/>
    <property type="match status" value="1"/>
</dbReference>
<dbReference type="FunFam" id="3.20.20.70:FF:000002">
    <property type="entry name" value="Transaldolase"/>
    <property type="match status" value="1"/>
</dbReference>
<dbReference type="Gene3D" id="3.20.20.70">
    <property type="entry name" value="Aldolase class I"/>
    <property type="match status" value="1"/>
</dbReference>
<dbReference type="HAMAP" id="MF_00492">
    <property type="entry name" value="Transaldolase_1"/>
    <property type="match status" value="1"/>
</dbReference>
<dbReference type="InterPro" id="IPR013785">
    <property type="entry name" value="Aldolase_TIM"/>
</dbReference>
<dbReference type="InterPro" id="IPR001585">
    <property type="entry name" value="TAL/FSA"/>
</dbReference>
<dbReference type="InterPro" id="IPR004730">
    <property type="entry name" value="Transaldolase_1"/>
</dbReference>
<dbReference type="InterPro" id="IPR018225">
    <property type="entry name" value="Transaldolase_AS"/>
</dbReference>
<dbReference type="NCBIfam" id="NF009001">
    <property type="entry name" value="PRK12346.1"/>
    <property type="match status" value="1"/>
</dbReference>
<dbReference type="NCBIfam" id="TIGR00874">
    <property type="entry name" value="talAB"/>
    <property type="match status" value="1"/>
</dbReference>
<dbReference type="PANTHER" id="PTHR10683">
    <property type="entry name" value="TRANSALDOLASE"/>
    <property type="match status" value="1"/>
</dbReference>
<dbReference type="PANTHER" id="PTHR10683:SF18">
    <property type="entry name" value="TRANSALDOLASE"/>
    <property type="match status" value="1"/>
</dbReference>
<dbReference type="Pfam" id="PF00923">
    <property type="entry name" value="TAL_FSA"/>
    <property type="match status" value="1"/>
</dbReference>
<dbReference type="SUPFAM" id="SSF51569">
    <property type="entry name" value="Aldolase"/>
    <property type="match status" value="1"/>
</dbReference>
<dbReference type="PROSITE" id="PS01054">
    <property type="entry name" value="TRANSALDOLASE_1"/>
    <property type="match status" value="1"/>
</dbReference>
<dbReference type="PROSITE" id="PS00958">
    <property type="entry name" value="TRANSALDOLASE_2"/>
    <property type="match status" value="1"/>
</dbReference>